<organism>
    <name type="scientific">Xanthomonas euvesicatoria pv. vesicatoria (strain 85-10)</name>
    <name type="common">Xanthomonas campestris pv. vesicatoria</name>
    <dbReference type="NCBI Taxonomy" id="316273"/>
    <lineage>
        <taxon>Bacteria</taxon>
        <taxon>Pseudomonadati</taxon>
        <taxon>Pseudomonadota</taxon>
        <taxon>Gammaproteobacteria</taxon>
        <taxon>Lysobacterales</taxon>
        <taxon>Lysobacteraceae</taxon>
        <taxon>Xanthomonas</taxon>
    </lineage>
</organism>
<name>DABA_XANE5</name>
<reference key="1">
    <citation type="journal article" date="2005" name="J. Bacteriol.">
        <title>Insights into genome plasticity and pathogenicity of the plant pathogenic Bacterium Xanthomonas campestris pv. vesicatoria revealed by the complete genome sequence.</title>
        <authorList>
            <person name="Thieme F."/>
            <person name="Koebnik R."/>
            <person name="Bekel T."/>
            <person name="Berger C."/>
            <person name="Boch J."/>
            <person name="Buettner D."/>
            <person name="Caldana C."/>
            <person name="Gaigalat L."/>
            <person name="Goesmann A."/>
            <person name="Kay S."/>
            <person name="Kirchner O."/>
            <person name="Lanz C."/>
            <person name="Linke B."/>
            <person name="McHardy A.C."/>
            <person name="Meyer F."/>
            <person name="Mittenhuber G."/>
            <person name="Nies D.H."/>
            <person name="Niesbach-Kloesgen U."/>
            <person name="Patschkowski T."/>
            <person name="Rueckert C."/>
            <person name="Rupp O."/>
            <person name="Schneiker S."/>
            <person name="Schuster S.C."/>
            <person name="Vorhoelter F.J."/>
            <person name="Weber E."/>
            <person name="Puehler A."/>
            <person name="Bonas U."/>
            <person name="Bartels D."/>
            <person name="Kaiser O."/>
        </authorList>
    </citation>
    <scope>NUCLEOTIDE SEQUENCE [LARGE SCALE GENOMIC DNA]</scope>
    <source>
        <strain>85-10</strain>
    </source>
</reference>
<gene>
    <name evidence="1" type="primary">dabA</name>
    <name type="ordered locus">XCV2176</name>
</gene>
<feature type="chain" id="PRO_0000387326" description="Probable inorganic carbon transporter subunit DabA">
    <location>
        <begin position="1"/>
        <end position="812"/>
    </location>
</feature>
<feature type="binding site" evidence="1">
    <location>
        <position position="337"/>
    </location>
    <ligand>
        <name>Zn(2+)</name>
        <dbReference type="ChEBI" id="CHEBI:29105"/>
    </ligand>
</feature>
<feature type="binding site" evidence="1">
    <location>
        <position position="339"/>
    </location>
    <ligand>
        <name>Zn(2+)</name>
        <dbReference type="ChEBI" id="CHEBI:29105"/>
    </ligand>
</feature>
<feature type="binding site" evidence="1">
    <location>
        <position position="499"/>
    </location>
    <ligand>
        <name>Zn(2+)</name>
        <dbReference type="ChEBI" id="CHEBI:29105"/>
    </ligand>
</feature>
<feature type="binding site" evidence="1">
    <location>
        <position position="514"/>
    </location>
    <ligand>
        <name>Zn(2+)</name>
        <dbReference type="ChEBI" id="CHEBI:29105"/>
    </ligand>
</feature>
<comment type="function">
    <text evidence="1">Part of an energy-coupled inorganic carbon pump.</text>
</comment>
<comment type="cofactor">
    <cofactor evidence="1">
        <name>Zn(2+)</name>
        <dbReference type="ChEBI" id="CHEBI:29105"/>
    </cofactor>
</comment>
<comment type="subunit">
    <text evidence="1">Forms a complex with DabB.</text>
</comment>
<comment type="subcellular location">
    <subcellularLocation>
        <location evidence="1">Cell inner membrane</location>
        <topology evidence="1">Peripheral membrane protein</topology>
    </subcellularLocation>
</comment>
<comment type="similarity">
    <text evidence="1">Belongs to the inorganic carbon transporter (TC 9.A.2) DabA family.</text>
</comment>
<dbReference type="EMBL" id="AM039952">
    <property type="protein sequence ID" value="CAJ23853.1"/>
    <property type="molecule type" value="Genomic_DNA"/>
</dbReference>
<dbReference type="RefSeq" id="WP_011347400.1">
    <property type="nucleotide sequence ID" value="NZ_CP017190.1"/>
</dbReference>
<dbReference type="STRING" id="456327.BJD11_11525"/>
<dbReference type="KEGG" id="xcv:XCV2176"/>
<dbReference type="eggNOG" id="COG3002">
    <property type="taxonomic scope" value="Bacteria"/>
</dbReference>
<dbReference type="HOGENOM" id="CLU_009885_1_0_6"/>
<dbReference type="Proteomes" id="UP000007069">
    <property type="component" value="Chromosome"/>
</dbReference>
<dbReference type="GO" id="GO:0005886">
    <property type="term" value="C:plasma membrane"/>
    <property type="evidence" value="ECO:0007669"/>
    <property type="project" value="UniProtKB-SubCell"/>
</dbReference>
<dbReference type="GO" id="GO:0008270">
    <property type="term" value="F:zinc ion binding"/>
    <property type="evidence" value="ECO:0007669"/>
    <property type="project" value="UniProtKB-UniRule"/>
</dbReference>
<dbReference type="HAMAP" id="MF_01871">
    <property type="entry name" value="DabA"/>
    <property type="match status" value="1"/>
</dbReference>
<dbReference type="InterPro" id="IPR018752">
    <property type="entry name" value="DabA"/>
</dbReference>
<dbReference type="PANTHER" id="PTHR38344:SF1">
    <property type="entry name" value="INORGANIC CARBON TRANSPORTER SUBUNIT DABA-RELATED"/>
    <property type="match status" value="1"/>
</dbReference>
<dbReference type="PANTHER" id="PTHR38344">
    <property type="entry name" value="UPF0753 PROTEIN AQ_863"/>
    <property type="match status" value="1"/>
</dbReference>
<dbReference type="Pfam" id="PF10070">
    <property type="entry name" value="DabA"/>
    <property type="match status" value="1"/>
</dbReference>
<evidence type="ECO:0000255" key="1">
    <source>
        <dbReference type="HAMAP-Rule" id="MF_01871"/>
    </source>
</evidence>
<sequence>MTTTPTAMPVSPSHDVIIAAAQRAARAIPPLWPLASSVAVNPFLGQGSEPLEMAGARLRRASGIAITMPRSWYAERLQSGQIAEQDLQAALQNAPAALRPPNLPALKQAVQAARPAPQALPTVAELARDADAVDWPGIVNERIGHWAAGYFDQGQALWAVGQSGGAYSTWRIIATHDLTPEIAGLAGFARYVAEAPANAEDAIVDCVARLGLSQDALDGYFHRLLTTLGGWGQLARYRLWQAELSGATDACVTDLLAVRLLWEAALLGNGGCTLVPGWQRAVAAYAEPVAATSDDVIDSILQEAAERAAQRKLSAVLAAPSPAQVASGRVKLQMAFCIDVRSEVFRRALESLDSGIQTLGFAGFFGLGIGHRRFASDVVEARLPVLLTPGVTTCAGDATSSAAASDLSARIAARAKRAWGRFKLAAISSFAFVEATGPIYVAKLLRDGLALARPHAPDEPAPRPADGLDLETRLTMATRILKAMSFTGGFARLVVLAGHGAKVVNNPHASALHCGACGGYSGEVNARLLASLLNDSQVRAGLAARGIVIPADTLFLAALHDTTTDAVTLYTADHPSPGHAEDLAQARQWLGAAGALARGERAVRLPRAHRSQDIAHRARDWAEIRPEWALAGCQAFIAAPRSRTAGRDLAGRAFLHDYDWRYDDGFGVLELILTAPVVVASWISLQYYGSTVAPESLGAGNKLLHNVTGGIGVVEGNGGILRTGLPWQSVHDGQRLTHEPLRLSVLIEAPPEAIATILERHPQVRALFDNRWLHLFALDDEGRMAHRYAGDLRWEQNASGARSCDHSVPMLA</sequence>
<keyword id="KW-0997">Cell inner membrane</keyword>
<keyword id="KW-1003">Cell membrane</keyword>
<keyword id="KW-0472">Membrane</keyword>
<keyword id="KW-0479">Metal-binding</keyword>
<keyword id="KW-0813">Transport</keyword>
<keyword id="KW-0862">Zinc</keyword>
<protein>
    <recommendedName>
        <fullName evidence="1">Probable inorganic carbon transporter subunit DabA</fullName>
    </recommendedName>
</protein>
<proteinExistence type="inferred from homology"/>
<accession>Q3BTK6</accession>